<keyword id="KW-0001">2Fe-2S</keyword>
<keyword id="KW-0010">Activator</keyword>
<keyword id="KW-0238">DNA-binding</keyword>
<keyword id="KW-0408">Iron</keyword>
<keyword id="KW-0411">Iron-sulfur</keyword>
<keyword id="KW-0479">Metal-binding</keyword>
<keyword id="KW-1185">Reference proteome</keyword>
<keyword id="KW-0678">Repressor</keyword>
<keyword id="KW-0804">Transcription</keyword>
<keyword id="KW-0805">Transcription regulation</keyword>
<sequence>MRLTSKGRYAVTAMLDVALHSQEGPVPLADISERQGISLSYLEQLFSRLRKNGLVSSVRGPGGGYLLGKDASEIVVAEVIFAVDESVDATRCQGREGCQGGDRCLTHALWRDLSDRITGFLSSISLEELVNNQEVLDVAGRQDNDKRRAPNGRAQETINVNLRP</sequence>
<evidence type="ECO:0000255" key="1">
    <source>
        <dbReference type="HAMAP-Rule" id="MF_01176"/>
    </source>
</evidence>
<evidence type="ECO:0000256" key="2">
    <source>
        <dbReference type="SAM" id="MobiDB-lite"/>
    </source>
</evidence>
<protein>
    <recommendedName>
        <fullName evidence="1">HTH-type transcriptional regulator IscR</fullName>
    </recommendedName>
</protein>
<dbReference type="EMBL" id="BX571870">
    <property type="protein sequence ID" value="CAE15658.1"/>
    <property type="molecule type" value="Genomic_DNA"/>
</dbReference>
<dbReference type="RefSeq" id="WP_011147479.1">
    <property type="nucleotide sequence ID" value="NC_005126.1"/>
</dbReference>
<dbReference type="SMR" id="Q7N223"/>
<dbReference type="STRING" id="243265.plu3284"/>
<dbReference type="GeneID" id="48849539"/>
<dbReference type="KEGG" id="plu:plu3284"/>
<dbReference type="eggNOG" id="COG1959">
    <property type="taxonomic scope" value="Bacteria"/>
</dbReference>
<dbReference type="HOGENOM" id="CLU_107144_0_0_6"/>
<dbReference type="OrthoDB" id="9808360at2"/>
<dbReference type="Proteomes" id="UP000002514">
    <property type="component" value="Chromosome"/>
</dbReference>
<dbReference type="GO" id="GO:0005829">
    <property type="term" value="C:cytosol"/>
    <property type="evidence" value="ECO:0007669"/>
    <property type="project" value="TreeGrafter"/>
</dbReference>
<dbReference type="GO" id="GO:0051537">
    <property type="term" value="F:2 iron, 2 sulfur cluster binding"/>
    <property type="evidence" value="ECO:0007669"/>
    <property type="project" value="UniProtKB-KW"/>
</dbReference>
<dbReference type="GO" id="GO:0003700">
    <property type="term" value="F:DNA-binding transcription factor activity"/>
    <property type="evidence" value="ECO:0007669"/>
    <property type="project" value="UniProtKB-UniRule"/>
</dbReference>
<dbReference type="GO" id="GO:0003690">
    <property type="term" value="F:double-stranded DNA binding"/>
    <property type="evidence" value="ECO:0007669"/>
    <property type="project" value="UniProtKB-UniRule"/>
</dbReference>
<dbReference type="GO" id="GO:0005506">
    <property type="term" value="F:iron ion binding"/>
    <property type="evidence" value="ECO:0007669"/>
    <property type="project" value="UniProtKB-UniRule"/>
</dbReference>
<dbReference type="FunFam" id="1.10.10.10:FF:000026">
    <property type="entry name" value="HTH-type transcriptional regulator IscR"/>
    <property type="match status" value="1"/>
</dbReference>
<dbReference type="Gene3D" id="1.10.10.10">
    <property type="entry name" value="Winged helix-like DNA-binding domain superfamily/Winged helix DNA-binding domain"/>
    <property type="match status" value="1"/>
</dbReference>
<dbReference type="HAMAP" id="MF_01176">
    <property type="entry name" value="HTH_type_IscR"/>
    <property type="match status" value="1"/>
</dbReference>
<dbReference type="InterPro" id="IPR010242">
    <property type="entry name" value="TF_HTH_IscR"/>
</dbReference>
<dbReference type="InterPro" id="IPR030489">
    <property type="entry name" value="TR_Rrf2-type_CS"/>
</dbReference>
<dbReference type="InterPro" id="IPR000944">
    <property type="entry name" value="Tscrpt_reg_Rrf2"/>
</dbReference>
<dbReference type="InterPro" id="IPR036388">
    <property type="entry name" value="WH-like_DNA-bd_sf"/>
</dbReference>
<dbReference type="InterPro" id="IPR036390">
    <property type="entry name" value="WH_DNA-bd_sf"/>
</dbReference>
<dbReference type="NCBIfam" id="TIGR02010">
    <property type="entry name" value="IscR"/>
    <property type="match status" value="1"/>
</dbReference>
<dbReference type="NCBIfam" id="NF008110">
    <property type="entry name" value="PRK10857.1"/>
    <property type="match status" value="1"/>
</dbReference>
<dbReference type="NCBIfam" id="TIGR00738">
    <property type="entry name" value="rrf2_super"/>
    <property type="match status" value="1"/>
</dbReference>
<dbReference type="PANTHER" id="PTHR33221:SF5">
    <property type="entry name" value="HTH-TYPE TRANSCRIPTIONAL REGULATOR ISCR"/>
    <property type="match status" value="1"/>
</dbReference>
<dbReference type="PANTHER" id="PTHR33221">
    <property type="entry name" value="WINGED HELIX-TURN-HELIX TRANSCRIPTIONAL REGULATOR, RRF2 FAMILY"/>
    <property type="match status" value="1"/>
</dbReference>
<dbReference type="Pfam" id="PF02082">
    <property type="entry name" value="Rrf2"/>
    <property type="match status" value="1"/>
</dbReference>
<dbReference type="SUPFAM" id="SSF46785">
    <property type="entry name" value="Winged helix' DNA-binding domain"/>
    <property type="match status" value="1"/>
</dbReference>
<dbReference type="PROSITE" id="PS01332">
    <property type="entry name" value="HTH_RRF2_1"/>
    <property type="match status" value="1"/>
</dbReference>
<dbReference type="PROSITE" id="PS51197">
    <property type="entry name" value="HTH_RRF2_2"/>
    <property type="match status" value="1"/>
</dbReference>
<organism>
    <name type="scientific">Photorhabdus laumondii subsp. laumondii (strain DSM 15139 / CIP 105565 / TT01)</name>
    <name type="common">Photorhabdus luminescens subsp. laumondii</name>
    <dbReference type="NCBI Taxonomy" id="243265"/>
    <lineage>
        <taxon>Bacteria</taxon>
        <taxon>Pseudomonadati</taxon>
        <taxon>Pseudomonadota</taxon>
        <taxon>Gammaproteobacteria</taxon>
        <taxon>Enterobacterales</taxon>
        <taxon>Morganellaceae</taxon>
        <taxon>Photorhabdus</taxon>
    </lineage>
</organism>
<gene>
    <name evidence="1" type="primary">iscR</name>
    <name type="ordered locus">plu3284</name>
</gene>
<proteinExistence type="inferred from homology"/>
<name>ISCR_PHOLL</name>
<comment type="function">
    <text evidence="1">Regulates the transcription of several operons and genes involved in the biogenesis of Fe-S clusters and Fe-S-containing proteins.</text>
</comment>
<comment type="cofactor">
    <cofactor evidence="1">
        <name>[2Fe-2S] cluster</name>
        <dbReference type="ChEBI" id="CHEBI:190135"/>
    </cofactor>
    <text evidence="1">Binds 1 [2Fe-2S] cluster.</text>
</comment>
<reference key="1">
    <citation type="journal article" date="2003" name="Nat. Biotechnol.">
        <title>The genome sequence of the entomopathogenic bacterium Photorhabdus luminescens.</title>
        <authorList>
            <person name="Duchaud E."/>
            <person name="Rusniok C."/>
            <person name="Frangeul L."/>
            <person name="Buchrieser C."/>
            <person name="Givaudan A."/>
            <person name="Taourit S."/>
            <person name="Bocs S."/>
            <person name="Boursaux-Eude C."/>
            <person name="Chandler M."/>
            <person name="Charles J.-F."/>
            <person name="Dassa E."/>
            <person name="Derose R."/>
            <person name="Derzelle S."/>
            <person name="Freyssinet G."/>
            <person name="Gaudriault S."/>
            <person name="Medigue C."/>
            <person name="Lanois A."/>
            <person name="Powell K."/>
            <person name="Siguier P."/>
            <person name="Vincent R."/>
            <person name="Wingate V."/>
            <person name="Zouine M."/>
            <person name="Glaser P."/>
            <person name="Boemare N."/>
            <person name="Danchin A."/>
            <person name="Kunst F."/>
        </authorList>
    </citation>
    <scope>NUCLEOTIDE SEQUENCE [LARGE SCALE GENOMIC DNA]</scope>
    <source>
        <strain>DSM 15139 / CIP 105565 / TT01</strain>
    </source>
</reference>
<feature type="chain" id="PRO_0000268921" description="HTH-type transcriptional regulator IscR">
    <location>
        <begin position="1"/>
        <end position="164"/>
    </location>
</feature>
<feature type="domain" description="HTH rrf2-type" evidence="1">
    <location>
        <begin position="2"/>
        <end position="131"/>
    </location>
</feature>
<feature type="DNA-binding region" description="H-T-H motif" evidence="1">
    <location>
        <begin position="28"/>
        <end position="51"/>
    </location>
</feature>
<feature type="region of interest" description="Disordered" evidence="2">
    <location>
        <begin position="141"/>
        <end position="164"/>
    </location>
</feature>
<feature type="compositionally biased region" description="Polar residues" evidence="2">
    <location>
        <begin position="154"/>
        <end position="164"/>
    </location>
</feature>
<feature type="binding site" evidence="1">
    <location>
        <position position="92"/>
    </location>
    <ligand>
        <name>[2Fe-2S] cluster</name>
        <dbReference type="ChEBI" id="CHEBI:190135"/>
    </ligand>
</feature>
<feature type="binding site" evidence="1">
    <location>
        <position position="98"/>
    </location>
    <ligand>
        <name>[2Fe-2S] cluster</name>
        <dbReference type="ChEBI" id="CHEBI:190135"/>
    </ligand>
</feature>
<feature type="binding site" evidence="1">
    <location>
        <position position="104"/>
    </location>
    <ligand>
        <name>[2Fe-2S] cluster</name>
        <dbReference type="ChEBI" id="CHEBI:190135"/>
    </ligand>
</feature>
<accession>Q7N223</accession>